<sequence length="375" mass="39919">MRTRAAVALEAGKPLEVMEVNLEGPKAGEVMVEIKATGICHTDEFTLSGADPEGLFPSILGHEGAGVVVEVGPGVTSVKPGNHVIPLYTPECRQCASCLSGKTNLCTAIRATQGQGLMPDGTSRFSMLDGTPIFHYMGCSTFSNYTVLPEIAVAKVREDAPFDKICYIGCGVTTGIGAVINTAKVEIGAKAVVFGLGGIGLNVLQGLRLAGADMIIGVDLNDDKKPMAEHFGMTHFINPKNCENVVQEIVNLTKTPFDQIGGADYSFDCTGNVKVMRDALECTHRGWGQSIIIGVAPAGAEISTRPFQLVTGRVWKGTAFGGARGRTDVPQIVDWYMDGKIEIDPMITHTLSLDDINKGFDLMHAGESIRSVVLY</sequence>
<protein>
    <recommendedName>
        <fullName>S-(hydroxymethyl)glutathione dehydrogenase</fullName>
        <ecNumber evidence="2">1.1.1.284</ecNumber>
    </recommendedName>
    <alternativeName>
        <fullName evidence="2">Alcohol dehydrogenase</fullName>
        <ecNumber evidence="2">1.1.1.1</ecNumber>
    </alternativeName>
    <alternativeName>
        <fullName>Glutathione-dependent formaldehyde dehydrogenase</fullName>
        <shortName>FALDH</shortName>
        <shortName>FDH</shortName>
        <shortName>GSH-FDH</shortName>
        <ecNumber evidence="2">1.1.1.-</ecNumber>
    </alternativeName>
</protein>
<keyword id="KW-0903">Direct protein sequencing</keyword>
<keyword id="KW-0479">Metal-binding</keyword>
<keyword id="KW-0520">NAD</keyword>
<keyword id="KW-0560">Oxidoreductase</keyword>
<keyword id="KW-0862">Zinc</keyword>
<reference key="1">
    <citation type="journal article" date="1995" name="J. Bacteriol.">
        <title>Isolation, sequencing, and mutagenesis of the gene encoding NAD- and glutathione-dependent formaldehyde dehydrogenase (GD-FALDH) from Paracoccus denitrificans, in which GD-FALDH is essential for methylotrophic growth.</title>
        <authorList>
            <person name="Ras J."/>
            <person name="van Ophem P.W."/>
            <person name="Reijnders W.N.M."/>
            <person name="van Spanning R.J.M."/>
            <person name="Duine J.A."/>
            <person name="Stouthamer A.H."/>
            <person name="Harms N."/>
        </authorList>
    </citation>
    <scope>NUCLEOTIDE SEQUENCE [GENOMIC DNA]</scope>
    <scope>PROTEIN SEQUENCE OF 1-18</scope>
    <scope>SUBUNIT</scope>
</reference>
<proteinExistence type="evidence at protein level"/>
<name>FADH_PARDE</name>
<dbReference type="EC" id="1.1.1.284" evidence="2"/>
<dbReference type="EC" id="1.1.1.1" evidence="2"/>
<dbReference type="EC" id="1.1.1.-" evidence="2"/>
<dbReference type="EMBL" id="U34346">
    <property type="protein sequence ID" value="AAC44551.1"/>
    <property type="molecule type" value="Genomic_DNA"/>
</dbReference>
<dbReference type="EMBL" id="L36327">
    <property type="protein sequence ID" value="AAA65962.1"/>
    <property type="molecule type" value="Genomic_DNA"/>
</dbReference>
<dbReference type="SMR" id="P45382"/>
<dbReference type="KEGG" id="ag:AAC44551"/>
<dbReference type="BioCyc" id="MetaCyc:MONOMER-4081"/>
<dbReference type="GO" id="GO:0005829">
    <property type="term" value="C:cytosol"/>
    <property type="evidence" value="ECO:0007669"/>
    <property type="project" value="TreeGrafter"/>
</dbReference>
<dbReference type="GO" id="GO:0004022">
    <property type="term" value="F:alcohol dehydrogenase (NAD+) activity"/>
    <property type="evidence" value="ECO:0007669"/>
    <property type="project" value="RHEA"/>
</dbReference>
<dbReference type="GO" id="GO:0106322">
    <property type="term" value="F:S-(hydroxymethyl)glutathione dehydrogenase (NAD+) activity"/>
    <property type="evidence" value="ECO:0007669"/>
    <property type="project" value="RHEA"/>
</dbReference>
<dbReference type="GO" id="GO:0106321">
    <property type="term" value="F:S-(hydroxymethyl)glutathione dehydrogenase (NADP+) activity"/>
    <property type="evidence" value="ECO:0007669"/>
    <property type="project" value="RHEA"/>
</dbReference>
<dbReference type="GO" id="GO:0080007">
    <property type="term" value="F:S-nitrosoglutathione reductase (NADH) activity"/>
    <property type="evidence" value="ECO:0007669"/>
    <property type="project" value="RHEA"/>
</dbReference>
<dbReference type="GO" id="GO:0008270">
    <property type="term" value="F:zinc ion binding"/>
    <property type="evidence" value="ECO:0007669"/>
    <property type="project" value="InterPro"/>
</dbReference>
<dbReference type="GO" id="GO:0046294">
    <property type="term" value="P:formaldehyde catabolic process"/>
    <property type="evidence" value="ECO:0007669"/>
    <property type="project" value="InterPro"/>
</dbReference>
<dbReference type="CDD" id="cd08300">
    <property type="entry name" value="alcohol_DH_class_III"/>
    <property type="match status" value="1"/>
</dbReference>
<dbReference type="FunFam" id="3.40.50.720:FF:000003">
    <property type="entry name" value="S-(hydroxymethyl)glutathione dehydrogenase"/>
    <property type="match status" value="1"/>
</dbReference>
<dbReference type="FunFam" id="3.90.180.10:FF:000001">
    <property type="entry name" value="S-(hydroxymethyl)glutathione dehydrogenase"/>
    <property type="match status" value="1"/>
</dbReference>
<dbReference type="Gene3D" id="3.90.180.10">
    <property type="entry name" value="Medium-chain alcohol dehydrogenases, catalytic domain"/>
    <property type="match status" value="1"/>
</dbReference>
<dbReference type="Gene3D" id="3.40.50.720">
    <property type="entry name" value="NAD(P)-binding Rossmann-like Domain"/>
    <property type="match status" value="1"/>
</dbReference>
<dbReference type="InterPro" id="IPR013149">
    <property type="entry name" value="ADH-like_C"/>
</dbReference>
<dbReference type="InterPro" id="IPR013154">
    <property type="entry name" value="ADH-like_N"/>
</dbReference>
<dbReference type="InterPro" id="IPR014183">
    <property type="entry name" value="ADH_3"/>
</dbReference>
<dbReference type="InterPro" id="IPR002328">
    <property type="entry name" value="ADH_Zn_CS"/>
</dbReference>
<dbReference type="InterPro" id="IPR011032">
    <property type="entry name" value="GroES-like_sf"/>
</dbReference>
<dbReference type="InterPro" id="IPR036291">
    <property type="entry name" value="NAD(P)-bd_dom_sf"/>
</dbReference>
<dbReference type="NCBIfam" id="TIGR02818">
    <property type="entry name" value="adh_III_F_hyde"/>
    <property type="match status" value="1"/>
</dbReference>
<dbReference type="PANTHER" id="PTHR43880">
    <property type="entry name" value="ALCOHOL DEHYDROGENASE"/>
    <property type="match status" value="1"/>
</dbReference>
<dbReference type="PANTHER" id="PTHR43880:SF12">
    <property type="entry name" value="ALCOHOL DEHYDROGENASE CLASS-3"/>
    <property type="match status" value="1"/>
</dbReference>
<dbReference type="Pfam" id="PF08240">
    <property type="entry name" value="ADH_N"/>
    <property type="match status" value="1"/>
</dbReference>
<dbReference type="Pfam" id="PF00107">
    <property type="entry name" value="ADH_zinc_N"/>
    <property type="match status" value="1"/>
</dbReference>
<dbReference type="SUPFAM" id="SSF50129">
    <property type="entry name" value="GroES-like"/>
    <property type="match status" value="2"/>
</dbReference>
<dbReference type="SUPFAM" id="SSF51735">
    <property type="entry name" value="NAD(P)-binding Rossmann-fold domains"/>
    <property type="match status" value="1"/>
</dbReference>
<dbReference type="PROSITE" id="PS00059">
    <property type="entry name" value="ADH_ZINC"/>
    <property type="match status" value="1"/>
</dbReference>
<evidence type="ECO:0000250" key="1">
    <source>
        <dbReference type="UniProtKB" id="P06525"/>
    </source>
</evidence>
<evidence type="ECO:0000250" key="2">
    <source>
        <dbReference type="UniProtKB" id="P32771"/>
    </source>
</evidence>
<evidence type="ECO:0000250" key="3">
    <source>
        <dbReference type="UniProtKB" id="Q96533"/>
    </source>
</evidence>
<evidence type="ECO:0000269" key="4">
    <source>
    </source>
</evidence>
<evidence type="ECO:0000305" key="5"/>
<gene>
    <name type="primary">flhA</name>
</gene>
<organism>
    <name type="scientific">Paracoccus denitrificans</name>
    <dbReference type="NCBI Taxonomy" id="266"/>
    <lineage>
        <taxon>Bacteria</taxon>
        <taxon>Pseudomonadati</taxon>
        <taxon>Pseudomonadota</taxon>
        <taxon>Alphaproteobacteria</taxon>
        <taxon>Rhodobacterales</taxon>
        <taxon>Paracoccaceae</taxon>
        <taxon>Paracoccus</taxon>
    </lineage>
</organism>
<feature type="chain" id="PRO_0000160779" description="S-(hydroxymethyl)glutathione dehydrogenase">
    <location>
        <begin position="1"/>
        <end position="375"/>
    </location>
</feature>
<feature type="binding site" evidence="3">
    <location>
        <position position="40"/>
    </location>
    <ligand>
        <name>Zn(2+)</name>
        <dbReference type="ChEBI" id="CHEBI:29105"/>
        <label>1</label>
        <note>catalytic</note>
    </ligand>
</feature>
<feature type="binding site" evidence="3">
    <location>
        <position position="41"/>
    </location>
    <ligand>
        <name>NAD(+)</name>
        <dbReference type="ChEBI" id="CHEBI:57540"/>
    </ligand>
</feature>
<feature type="binding site" evidence="3">
    <location>
        <position position="62"/>
    </location>
    <ligand>
        <name>Zn(2+)</name>
        <dbReference type="ChEBI" id="CHEBI:29105"/>
        <label>1</label>
        <note>catalytic</note>
    </ligand>
</feature>
<feature type="binding site" evidence="3">
    <location>
        <position position="63"/>
    </location>
    <ligand>
        <name>Zn(2+)</name>
        <dbReference type="ChEBI" id="CHEBI:29105"/>
        <label>1</label>
        <note>catalytic</note>
    </ligand>
</feature>
<feature type="binding site" evidence="3">
    <location>
        <position position="92"/>
    </location>
    <ligand>
        <name>Zn(2+)</name>
        <dbReference type="ChEBI" id="CHEBI:29105"/>
        <label>2</label>
    </ligand>
</feature>
<feature type="binding site" evidence="3">
    <location>
        <position position="95"/>
    </location>
    <ligand>
        <name>Zn(2+)</name>
        <dbReference type="ChEBI" id="CHEBI:29105"/>
        <label>2</label>
    </ligand>
</feature>
<feature type="binding site" evidence="3">
    <location>
        <position position="98"/>
    </location>
    <ligand>
        <name>Zn(2+)</name>
        <dbReference type="ChEBI" id="CHEBI:29105"/>
        <label>2</label>
    </ligand>
</feature>
<feature type="binding site" evidence="3">
    <location>
        <position position="106"/>
    </location>
    <ligand>
        <name>Zn(2+)</name>
        <dbReference type="ChEBI" id="CHEBI:29105"/>
        <label>2</label>
    </ligand>
</feature>
<feature type="binding site" evidence="3">
    <location>
        <position position="170"/>
    </location>
    <ligand>
        <name>Zn(2+)</name>
        <dbReference type="ChEBI" id="CHEBI:29105"/>
        <label>1</label>
        <note>catalytic</note>
    </ligand>
</feature>
<feature type="binding site" evidence="3">
    <location>
        <begin position="195"/>
        <end position="200"/>
    </location>
    <ligand>
        <name>NAD(+)</name>
        <dbReference type="ChEBI" id="CHEBI:57540"/>
    </ligand>
</feature>
<feature type="binding site" evidence="3">
    <location>
        <position position="219"/>
    </location>
    <ligand>
        <name>NAD(+)</name>
        <dbReference type="ChEBI" id="CHEBI:57540"/>
    </ligand>
</feature>
<feature type="binding site" evidence="3">
    <location>
        <begin position="293"/>
        <end position="295"/>
    </location>
    <ligand>
        <name>NAD(+)</name>
        <dbReference type="ChEBI" id="CHEBI:57540"/>
    </ligand>
</feature>
<feature type="binding site" evidence="3">
    <location>
        <begin position="318"/>
        <end position="320"/>
    </location>
    <ligand>
        <name>NAD(+)</name>
        <dbReference type="ChEBI" id="CHEBI:57540"/>
    </ligand>
</feature>
<accession>P45382</accession>
<comment type="function">
    <text evidence="2">Oxidizes long-chain alcohols and, in the presence of glutathione, is able to oxidize formaldehyde. Also acts as a S-nitroso-glutathione reductase by catalyzing the NADH-dependent reduction of S-nitrosoglutathione, thereby regulating protein S-nitrosylation.</text>
</comment>
<comment type="catalytic activity">
    <reaction evidence="2">
        <text>a primary alcohol + NAD(+) = an aldehyde + NADH + H(+)</text>
        <dbReference type="Rhea" id="RHEA:10736"/>
        <dbReference type="ChEBI" id="CHEBI:15378"/>
        <dbReference type="ChEBI" id="CHEBI:15734"/>
        <dbReference type="ChEBI" id="CHEBI:17478"/>
        <dbReference type="ChEBI" id="CHEBI:57540"/>
        <dbReference type="ChEBI" id="CHEBI:57945"/>
        <dbReference type="EC" id="1.1.1.1"/>
    </reaction>
</comment>
<comment type="catalytic activity">
    <reaction evidence="2">
        <text>a secondary alcohol + NAD(+) = a ketone + NADH + H(+)</text>
        <dbReference type="Rhea" id="RHEA:10740"/>
        <dbReference type="ChEBI" id="CHEBI:15378"/>
        <dbReference type="ChEBI" id="CHEBI:17087"/>
        <dbReference type="ChEBI" id="CHEBI:35681"/>
        <dbReference type="ChEBI" id="CHEBI:57540"/>
        <dbReference type="ChEBI" id="CHEBI:57945"/>
        <dbReference type="EC" id="1.1.1.1"/>
    </reaction>
</comment>
<comment type="catalytic activity">
    <reaction evidence="2">
        <text>S-(hydroxymethyl)glutathione + NADP(+) = S-formylglutathione + NADPH + H(+)</text>
        <dbReference type="Rhea" id="RHEA:19981"/>
        <dbReference type="ChEBI" id="CHEBI:15378"/>
        <dbReference type="ChEBI" id="CHEBI:57688"/>
        <dbReference type="ChEBI" id="CHEBI:57783"/>
        <dbReference type="ChEBI" id="CHEBI:58349"/>
        <dbReference type="ChEBI" id="CHEBI:58758"/>
        <dbReference type="EC" id="1.1.1.284"/>
    </reaction>
</comment>
<comment type="catalytic activity">
    <reaction evidence="1">
        <text>S-(hydroxymethyl)glutathione + NAD(+) = S-formylglutathione + NADH + H(+)</text>
        <dbReference type="Rhea" id="RHEA:19985"/>
        <dbReference type="ChEBI" id="CHEBI:15378"/>
        <dbReference type="ChEBI" id="CHEBI:57540"/>
        <dbReference type="ChEBI" id="CHEBI:57688"/>
        <dbReference type="ChEBI" id="CHEBI:57945"/>
        <dbReference type="ChEBI" id="CHEBI:58758"/>
        <dbReference type="EC" id="1.1.1.284"/>
    </reaction>
</comment>
<comment type="catalytic activity">
    <reaction evidence="2">
        <text>S-nitrosoglutathione + NADH + H(+) = S-(hydroxysulfenamide)glutathione + NAD(+)</text>
        <dbReference type="Rhea" id="RHEA:78371"/>
        <dbReference type="ChEBI" id="CHEBI:15378"/>
        <dbReference type="ChEBI" id="CHEBI:57540"/>
        <dbReference type="ChEBI" id="CHEBI:57945"/>
        <dbReference type="ChEBI" id="CHEBI:145544"/>
        <dbReference type="ChEBI" id="CHEBI:229723"/>
    </reaction>
</comment>
<comment type="cofactor">
    <cofactor evidence="1">
        <name>Zn(2+)</name>
        <dbReference type="ChEBI" id="CHEBI:29105"/>
    </cofactor>
    <text evidence="1">Binds 2 Zn(2+) ions per subunit.</text>
</comment>
<comment type="subunit">
    <text evidence="4">Homotetramer.</text>
</comment>
<comment type="similarity">
    <text evidence="5">Belongs to the zinc-containing alcohol dehydrogenase family. Class-III subfamily.</text>
</comment>